<protein>
    <recommendedName>
        <fullName evidence="1">Cell division protein ZapA</fullName>
    </recommendedName>
    <alternativeName>
        <fullName evidence="1">Z ring-associated protein ZapA</fullName>
    </alternativeName>
</protein>
<dbReference type="EMBL" id="AE016877">
    <property type="protein sequence ID" value="AAP11462.1"/>
    <property type="status" value="ALT_INIT"/>
    <property type="molecule type" value="Genomic_DNA"/>
</dbReference>
<dbReference type="RefSeq" id="NP_834261.1">
    <property type="nucleotide sequence ID" value="NC_004722.1"/>
</dbReference>
<dbReference type="RefSeq" id="WP_000082701.1">
    <property type="nucleotide sequence ID" value="NZ_CP138336.1"/>
</dbReference>
<dbReference type="SMR" id="Q817J1"/>
<dbReference type="STRING" id="226900.BC_4555"/>
<dbReference type="GeneID" id="93006559"/>
<dbReference type="KEGG" id="bce:BC4555"/>
<dbReference type="PATRIC" id="fig|226900.8.peg.4715"/>
<dbReference type="HOGENOM" id="CLU_116623_4_0_9"/>
<dbReference type="OrthoDB" id="9808604at2"/>
<dbReference type="Proteomes" id="UP000001417">
    <property type="component" value="Chromosome"/>
</dbReference>
<dbReference type="GO" id="GO:0032153">
    <property type="term" value="C:cell division site"/>
    <property type="evidence" value="ECO:0000318"/>
    <property type="project" value="GO_Central"/>
</dbReference>
<dbReference type="GO" id="GO:0030428">
    <property type="term" value="C:cell septum"/>
    <property type="evidence" value="ECO:0000318"/>
    <property type="project" value="GO_Central"/>
</dbReference>
<dbReference type="GO" id="GO:0005829">
    <property type="term" value="C:cytosol"/>
    <property type="evidence" value="ECO:0000318"/>
    <property type="project" value="GO_Central"/>
</dbReference>
<dbReference type="GO" id="GO:0005886">
    <property type="term" value="C:plasma membrane"/>
    <property type="evidence" value="ECO:0007669"/>
    <property type="project" value="UniProtKB-UniRule"/>
</dbReference>
<dbReference type="GO" id="GO:0000917">
    <property type="term" value="P:division septum assembly"/>
    <property type="evidence" value="ECO:0000318"/>
    <property type="project" value="GO_Central"/>
</dbReference>
<dbReference type="GO" id="GO:0043093">
    <property type="term" value="P:FtsZ-dependent cytokinesis"/>
    <property type="evidence" value="ECO:0000318"/>
    <property type="project" value="GO_Central"/>
</dbReference>
<dbReference type="GO" id="GO:0000921">
    <property type="term" value="P:septin ring assembly"/>
    <property type="evidence" value="ECO:0000318"/>
    <property type="project" value="GO_Central"/>
</dbReference>
<dbReference type="Gene3D" id="6.10.250.790">
    <property type="match status" value="1"/>
</dbReference>
<dbReference type="HAMAP" id="MF_02013">
    <property type="entry name" value="ZapA_type2"/>
    <property type="match status" value="1"/>
</dbReference>
<dbReference type="InterPro" id="IPR053712">
    <property type="entry name" value="Bac_CellDiv_Activator"/>
</dbReference>
<dbReference type="InterPro" id="IPR007838">
    <property type="entry name" value="Cell_div_ZapA-like"/>
</dbReference>
<dbReference type="InterPro" id="IPR036192">
    <property type="entry name" value="Cell_div_ZapA-like_sf"/>
</dbReference>
<dbReference type="InterPro" id="IPR023688">
    <property type="entry name" value="Cell_div_ZapA_firmicutes"/>
</dbReference>
<dbReference type="NCBIfam" id="NF010724">
    <property type="entry name" value="PRK14126.1"/>
    <property type="match status" value="1"/>
</dbReference>
<dbReference type="PANTHER" id="PTHR34981">
    <property type="entry name" value="CELL DIVISION PROTEIN ZAPA"/>
    <property type="match status" value="1"/>
</dbReference>
<dbReference type="PANTHER" id="PTHR34981:SF1">
    <property type="entry name" value="CELL DIVISION PROTEIN ZAPA"/>
    <property type="match status" value="1"/>
</dbReference>
<dbReference type="Pfam" id="PF05164">
    <property type="entry name" value="ZapA"/>
    <property type="match status" value="1"/>
</dbReference>
<dbReference type="SUPFAM" id="SSF102829">
    <property type="entry name" value="Cell division protein ZapA-like"/>
    <property type="match status" value="1"/>
</dbReference>
<feature type="chain" id="PRO_0000345680" description="Cell division protein ZapA">
    <location>
        <begin position="1"/>
        <end position="89"/>
    </location>
</feature>
<proteinExistence type="inferred from homology"/>
<organism>
    <name type="scientific">Bacillus cereus (strain ATCC 14579 / DSM 31 / CCUG 7414 / JCM 2152 / NBRC 15305 / NCIMB 9373 / NCTC 2599 / NRRL B-3711)</name>
    <dbReference type="NCBI Taxonomy" id="226900"/>
    <lineage>
        <taxon>Bacteria</taxon>
        <taxon>Bacillati</taxon>
        <taxon>Bacillota</taxon>
        <taxon>Bacilli</taxon>
        <taxon>Bacillales</taxon>
        <taxon>Bacillaceae</taxon>
        <taxon>Bacillus</taxon>
        <taxon>Bacillus cereus group</taxon>
    </lineage>
</organism>
<reference key="1">
    <citation type="journal article" date="2003" name="Nature">
        <title>Genome sequence of Bacillus cereus and comparative analysis with Bacillus anthracis.</title>
        <authorList>
            <person name="Ivanova N."/>
            <person name="Sorokin A."/>
            <person name="Anderson I."/>
            <person name="Galleron N."/>
            <person name="Candelon B."/>
            <person name="Kapatral V."/>
            <person name="Bhattacharyya A."/>
            <person name="Reznik G."/>
            <person name="Mikhailova N."/>
            <person name="Lapidus A."/>
            <person name="Chu L."/>
            <person name="Mazur M."/>
            <person name="Goltsman E."/>
            <person name="Larsen N."/>
            <person name="D'Souza M."/>
            <person name="Walunas T."/>
            <person name="Grechkin Y."/>
            <person name="Pusch G."/>
            <person name="Haselkorn R."/>
            <person name="Fonstein M."/>
            <person name="Ehrlich S.D."/>
            <person name="Overbeek R."/>
            <person name="Kyrpides N.C."/>
        </authorList>
    </citation>
    <scope>NUCLEOTIDE SEQUENCE [LARGE SCALE GENOMIC DNA]</scope>
    <source>
        <strain>ATCC 14579 / DSM 31 / CCUG 7414 / JCM 2152 / NBRC 15305 / NCIMB 9373 / NCTC 2599 / NRRL B-3711</strain>
    </source>
</reference>
<accession>Q817J1</accession>
<name>ZAPA_BACCR</name>
<evidence type="ECO:0000255" key="1">
    <source>
        <dbReference type="HAMAP-Rule" id="MF_02013"/>
    </source>
</evidence>
<evidence type="ECO:0000305" key="2"/>
<gene>
    <name evidence="1" type="primary">zapA</name>
    <name type="ordered locus">BC_4555</name>
</gene>
<comment type="function">
    <text evidence="1">Activator of cell division through the inhibition of FtsZ GTPase activity, therefore promoting FtsZ assembly into bundles of protofilaments necessary for the formation of the division Z ring. It is recruited early at mid-cell but it is not essential for cell division.</text>
</comment>
<comment type="subunit">
    <text evidence="1">Homodimer. Interacts with FtsZ.</text>
</comment>
<comment type="subcellular location">
    <subcellularLocation>
        <location evidence="1">Cytoplasm</location>
    </subcellularLocation>
    <text evidence="1">Localizes at mid-cell. In sporulating cells, localizes near the cell poles.</text>
</comment>
<comment type="similarity">
    <text evidence="1">Belongs to the ZapA family. Type 2 subfamily.</text>
</comment>
<comment type="sequence caution" evidence="2">
    <conflict type="erroneous initiation">
        <sequence resource="EMBL-CDS" id="AAP11462"/>
    </conflict>
</comment>
<keyword id="KW-0131">Cell cycle</keyword>
<keyword id="KW-0132">Cell division</keyword>
<keyword id="KW-0963">Cytoplasm</keyword>
<keyword id="KW-1185">Reference proteome</keyword>
<keyword id="KW-0717">Septation</keyword>
<sequence>MSQQKGKKSRINVEIYGQQYSVVGDESTSHIRMVAAIVDDKMRELNAKNPSLDTSRLAVLTAVNVIHDYIKLKEEHEKLKESMTKKGME</sequence>